<accession>Q4L6X8</accession>
<reference key="1">
    <citation type="journal article" date="2005" name="J. Bacteriol.">
        <title>Whole-genome sequencing of Staphylococcus haemolyticus uncovers the extreme plasticity of its genome and the evolution of human-colonizing staphylococcal species.</title>
        <authorList>
            <person name="Takeuchi F."/>
            <person name="Watanabe S."/>
            <person name="Baba T."/>
            <person name="Yuzawa H."/>
            <person name="Ito T."/>
            <person name="Morimoto Y."/>
            <person name="Kuroda M."/>
            <person name="Cui L."/>
            <person name="Takahashi M."/>
            <person name="Ankai A."/>
            <person name="Baba S."/>
            <person name="Fukui S."/>
            <person name="Lee J.C."/>
            <person name="Hiramatsu K."/>
        </authorList>
    </citation>
    <scope>NUCLEOTIDE SEQUENCE [LARGE SCALE GENOMIC DNA]</scope>
    <source>
        <strain>JCSC1435</strain>
    </source>
</reference>
<proteinExistence type="inferred from homology"/>
<comment type="function">
    <text evidence="1">An aminoacyl-tRNA editing enzyme that deacylates mischarged D-aminoacyl-tRNAs. Also deacylates mischarged glycyl-tRNA(Ala), protecting cells against glycine mischarging by AlaRS. Acts via tRNA-based rather than protein-based catalysis; rejects L-amino acids rather than detecting D-amino acids in the active site. By recycling D-aminoacyl-tRNA to D-amino acids and free tRNA molecules, this enzyme counteracts the toxicity associated with the formation of D-aminoacyl-tRNA entities in vivo and helps enforce protein L-homochirality.</text>
</comment>
<comment type="catalytic activity">
    <reaction evidence="1">
        <text>glycyl-tRNA(Ala) + H2O = tRNA(Ala) + glycine + H(+)</text>
        <dbReference type="Rhea" id="RHEA:53744"/>
        <dbReference type="Rhea" id="RHEA-COMP:9657"/>
        <dbReference type="Rhea" id="RHEA-COMP:13640"/>
        <dbReference type="ChEBI" id="CHEBI:15377"/>
        <dbReference type="ChEBI" id="CHEBI:15378"/>
        <dbReference type="ChEBI" id="CHEBI:57305"/>
        <dbReference type="ChEBI" id="CHEBI:78442"/>
        <dbReference type="ChEBI" id="CHEBI:78522"/>
        <dbReference type="EC" id="3.1.1.96"/>
    </reaction>
</comment>
<comment type="catalytic activity">
    <reaction evidence="1">
        <text>a D-aminoacyl-tRNA + H2O = a tRNA + a D-alpha-amino acid + H(+)</text>
        <dbReference type="Rhea" id="RHEA:13953"/>
        <dbReference type="Rhea" id="RHEA-COMP:10123"/>
        <dbReference type="Rhea" id="RHEA-COMP:10124"/>
        <dbReference type="ChEBI" id="CHEBI:15377"/>
        <dbReference type="ChEBI" id="CHEBI:15378"/>
        <dbReference type="ChEBI" id="CHEBI:59871"/>
        <dbReference type="ChEBI" id="CHEBI:78442"/>
        <dbReference type="ChEBI" id="CHEBI:79333"/>
        <dbReference type="EC" id="3.1.1.96"/>
    </reaction>
</comment>
<comment type="subunit">
    <text evidence="1">Homodimer.</text>
</comment>
<comment type="subcellular location">
    <subcellularLocation>
        <location evidence="1">Cytoplasm</location>
    </subcellularLocation>
</comment>
<comment type="domain">
    <text evidence="1">A Gly-cisPro motif from one monomer fits into the active site of the other monomer to allow specific chiral rejection of L-amino acids.</text>
</comment>
<comment type="similarity">
    <text evidence="1">Belongs to the DTD family.</text>
</comment>
<gene>
    <name evidence="1" type="primary">dtd</name>
    <name type="ordered locus">SH1288</name>
</gene>
<sequence length="150" mass="16664">MKVVVQRVKRAAVTNKSIHNEIDKGFCLLVGIGKDTTEADIDAVAKKIINARLFEDENGKLNLNIQQVEGQILSISQFTLYADVRKGNRPGFSNSKNPEEANVLYEKFNTALKAYDVEVKTGEFGTDMEVEIINDGPVTIIYESQDGKII</sequence>
<evidence type="ECO:0000255" key="1">
    <source>
        <dbReference type="HAMAP-Rule" id="MF_00518"/>
    </source>
</evidence>
<keyword id="KW-0963">Cytoplasm</keyword>
<keyword id="KW-0378">Hydrolase</keyword>
<keyword id="KW-0694">RNA-binding</keyword>
<keyword id="KW-0820">tRNA-binding</keyword>
<name>DTD_STAHJ</name>
<feature type="chain" id="PRO_0000259319" description="D-aminoacyl-tRNA deacylase">
    <location>
        <begin position="1"/>
        <end position="150"/>
    </location>
</feature>
<feature type="short sequence motif" description="Gly-cisPro motif, important for rejection of L-amino acids" evidence="1">
    <location>
        <begin position="136"/>
        <end position="137"/>
    </location>
</feature>
<organism>
    <name type="scientific">Staphylococcus haemolyticus (strain JCSC1435)</name>
    <dbReference type="NCBI Taxonomy" id="279808"/>
    <lineage>
        <taxon>Bacteria</taxon>
        <taxon>Bacillati</taxon>
        <taxon>Bacillota</taxon>
        <taxon>Bacilli</taxon>
        <taxon>Bacillales</taxon>
        <taxon>Staphylococcaceae</taxon>
        <taxon>Staphylococcus</taxon>
    </lineage>
</organism>
<protein>
    <recommendedName>
        <fullName evidence="1">D-aminoacyl-tRNA deacylase</fullName>
        <shortName evidence="1">DTD</shortName>
        <ecNumber evidence="1">3.1.1.96</ecNumber>
    </recommendedName>
    <alternativeName>
        <fullName evidence="1">Gly-tRNA(Ala) deacylase</fullName>
    </alternativeName>
</protein>
<dbReference type="EC" id="3.1.1.96" evidence="1"/>
<dbReference type="EMBL" id="AP006716">
    <property type="protein sequence ID" value="BAE04597.1"/>
    <property type="molecule type" value="Genomic_DNA"/>
</dbReference>
<dbReference type="RefSeq" id="WP_011275586.1">
    <property type="nucleotide sequence ID" value="NC_007168.1"/>
</dbReference>
<dbReference type="SMR" id="Q4L6X8"/>
<dbReference type="GeneID" id="93780690"/>
<dbReference type="KEGG" id="sha:SH1288"/>
<dbReference type="eggNOG" id="COG1490">
    <property type="taxonomic scope" value="Bacteria"/>
</dbReference>
<dbReference type="HOGENOM" id="CLU_076901_1_0_9"/>
<dbReference type="OrthoDB" id="9801395at2"/>
<dbReference type="Proteomes" id="UP000000543">
    <property type="component" value="Chromosome"/>
</dbReference>
<dbReference type="GO" id="GO:0005737">
    <property type="term" value="C:cytoplasm"/>
    <property type="evidence" value="ECO:0007669"/>
    <property type="project" value="UniProtKB-SubCell"/>
</dbReference>
<dbReference type="GO" id="GO:0051500">
    <property type="term" value="F:D-tyrosyl-tRNA(Tyr) deacylase activity"/>
    <property type="evidence" value="ECO:0007669"/>
    <property type="project" value="TreeGrafter"/>
</dbReference>
<dbReference type="GO" id="GO:0106026">
    <property type="term" value="F:Gly-tRNA(Ala) deacylase activity"/>
    <property type="evidence" value="ECO:0007669"/>
    <property type="project" value="UniProtKB-UniRule"/>
</dbReference>
<dbReference type="GO" id="GO:0043908">
    <property type="term" value="F:Ser(Gly)-tRNA(Ala) hydrolase activity"/>
    <property type="evidence" value="ECO:0007669"/>
    <property type="project" value="UniProtKB-UniRule"/>
</dbReference>
<dbReference type="GO" id="GO:0000049">
    <property type="term" value="F:tRNA binding"/>
    <property type="evidence" value="ECO:0007669"/>
    <property type="project" value="UniProtKB-UniRule"/>
</dbReference>
<dbReference type="GO" id="GO:0019478">
    <property type="term" value="P:D-amino acid catabolic process"/>
    <property type="evidence" value="ECO:0007669"/>
    <property type="project" value="UniProtKB-UniRule"/>
</dbReference>
<dbReference type="FunFam" id="3.50.80.10:FF:000001">
    <property type="entry name" value="D-aminoacyl-tRNA deacylase"/>
    <property type="match status" value="1"/>
</dbReference>
<dbReference type="Gene3D" id="3.50.80.10">
    <property type="entry name" value="D-tyrosyl-tRNA(Tyr) deacylase"/>
    <property type="match status" value="1"/>
</dbReference>
<dbReference type="HAMAP" id="MF_00518">
    <property type="entry name" value="Deacylase_Dtd"/>
    <property type="match status" value="1"/>
</dbReference>
<dbReference type="InterPro" id="IPR003732">
    <property type="entry name" value="Daa-tRNA_deacyls_DTD"/>
</dbReference>
<dbReference type="InterPro" id="IPR023509">
    <property type="entry name" value="DTD-like_sf"/>
</dbReference>
<dbReference type="NCBIfam" id="TIGR00256">
    <property type="entry name" value="D-aminoacyl-tRNA deacylase"/>
    <property type="match status" value="1"/>
</dbReference>
<dbReference type="PANTHER" id="PTHR10472:SF5">
    <property type="entry name" value="D-AMINOACYL-TRNA DEACYLASE 1"/>
    <property type="match status" value="1"/>
</dbReference>
<dbReference type="PANTHER" id="PTHR10472">
    <property type="entry name" value="D-TYROSYL-TRNA TYR DEACYLASE"/>
    <property type="match status" value="1"/>
</dbReference>
<dbReference type="Pfam" id="PF02580">
    <property type="entry name" value="Tyr_Deacylase"/>
    <property type="match status" value="1"/>
</dbReference>
<dbReference type="SUPFAM" id="SSF69500">
    <property type="entry name" value="DTD-like"/>
    <property type="match status" value="1"/>
</dbReference>